<sequence>MTDDNIRQIAFYGKGGIGKSTTSQNTLAAMAEMGQRILIVGCDPKADSTRLMLHSKAQTTVLHLAAERGAVEDI</sequence>
<keyword id="KW-0004">4Fe-4S</keyword>
<keyword id="KW-0067">ATP-binding</keyword>
<keyword id="KW-0408">Iron</keyword>
<keyword id="KW-0411">Iron-sulfur</keyword>
<keyword id="KW-0479">Metal-binding</keyword>
<keyword id="KW-0535">Nitrogen fixation</keyword>
<keyword id="KW-0547">Nucleotide-binding</keyword>
<keyword id="KW-0560">Oxidoreductase</keyword>
<reference key="1">
    <citation type="journal article" date="1996" name="J. Bacteriol.">
        <title>GlbN (cyanoglobin) is a peripheral membrane protein that is restricted to certain Nostoc spp.</title>
        <authorList>
            <person name="Hill D.R."/>
            <person name="Belbin T.J."/>
            <person name="Thorsteinsson M.V."/>
            <person name="Bassam D."/>
            <person name="Brass S."/>
            <person name="Ernst A."/>
            <person name="Boger P."/>
            <person name="Paerl H."/>
            <person name="Mulligan M.E."/>
            <person name="Potts M."/>
        </authorList>
    </citation>
    <scope>NUCLEOTIDE SEQUENCE [GENOMIC DNA]</scope>
</reference>
<gene>
    <name type="primary">nifH</name>
</gene>
<evidence type="ECO:0000250" key="1"/>
<evidence type="ECO:0000255" key="2"/>
<evidence type="ECO:0000305" key="3"/>
<feature type="chain" id="PRO_0000139517" description="Nitrogenase iron protein">
    <location>
        <begin position="1"/>
        <end position="74" status="greater than"/>
    </location>
</feature>
<feature type="binding site" evidence="2">
    <location>
        <begin position="13"/>
        <end position="20"/>
    </location>
    <ligand>
        <name>ATP</name>
        <dbReference type="ChEBI" id="CHEBI:30616"/>
    </ligand>
</feature>
<feature type="non-terminal residue">
    <location>
        <position position="74"/>
    </location>
</feature>
<comment type="function">
    <text evidence="1">The key enzymatic reactions in nitrogen fixation are catalyzed by the nitrogenase complex, which has 2 components: the iron protein and the molybdenum-iron protein.</text>
</comment>
<comment type="catalytic activity">
    <reaction>
        <text>N2 + 8 reduced [2Fe-2S]-[ferredoxin] + 16 ATP + 16 H2O = H2 + 8 oxidized [2Fe-2S]-[ferredoxin] + 2 NH4(+) + 16 ADP + 16 phosphate + 6 H(+)</text>
        <dbReference type="Rhea" id="RHEA:21448"/>
        <dbReference type="Rhea" id="RHEA-COMP:10000"/>
        <dbReference type="Rhea" id="RHEA-COMP:10001"/>
        <dbReference type="ChEBI" id="CHEBI:15377"/>
        <dbReference type="ChEBI" id="CHEBI:15378"/>
        <dbReference type="ChEBI" id="CHEBI:17997"/>
        <dbReference type="ChEBI" id="CHEBI:18276"/>
        <dbReference type="ChEBI" id="CHEBI:28938"/>
        <dbReference type="ChEBI" id="CHEBI:30616"/>
        <dbReference type="ChEBI" id="CHEBI:33737"/>
        <dbReference type="ChEBI" id="CHEBI:33738"/>
        <dbReference type="ChEBI" id="CHEBI:43474"/>
        <dbReference type="ChEBI" id="CHEBI:456216"/>
        <dbReference type="EC" id="1.18.6.1"/>
    </reaction>
</comment>
<comment type="cofactor">
    <cofactor evidence="1">
        <name>[4Fe-4S] cluster</name>
        <dbReference type="ChEBI" id="CHEBI:49883"/>
    </cofactor>
    <text evidence="1">Binds 1 [4Fe-4S] cluster per dimer.</text>
</comment>
<comment type="subunit">
    <text evidence="1">Homodimer.</text>
</comment>
<comment type="similarity">
    <text evidence="3">Belongs to the NifH/BchL/ChlL family.</text>
</comment>
<accession>P52336</accession>
<name>NIFH_NOSSN</name>
<organism>
    <name type="scientific">Nostoc sp. (strain MUN 8820)</name>
    <dbReference type="NCBI Taxonomy" id="55397"/>
    <lineage>
        <taxon>Bacteria</taxon>
        <taxon>Bacillati</taxon>
        <taxon>Cyanobacteriota</taxon>
        <taxon>Cyanophyceae</taxon>
        <taxon>Nostocales</taxon>
        <taxon>Nostocaceae</taxon>
        <taxon>Nostoc</taxon>
    </lineage>
</organism>
<dbReference type="EC" id="1.18.6.1"/>
<dbReference type="EMBL" id="L47979">
    <property type="protein sequence ID" value="AAB41123.1"/>
    <property type="molecule type" value="Genomic_DNA"/>
</dbReference>
<dbReference type="SMR" id="P52336"/>
<dbReference type="GO" id="GO:0051539">
    <property type="term" value="F:4 iron, 4 sulfur cluster binding"/>
    <property type="evidence" value="ECO:0007669"/>
    <property type="project" value="UniProtKB-KW"/>
</dbReference>
<dbReference type="GO" id="GO:0005524">
    <property type="term" value="F:ATP binding"/>
    <property type="evidence" value="ECO:0007669"/>
    <property type="project" value="UniProtKB-KW"/>
</dbReference>
<dbReference type="GO" id="GO:0046872">
    <property type="term" value="F:metal ion binding"/>
    <property type="evidence" value="ECO:0007669"/>
    <property type="project" value="UniProtKB-KW"/>
</dbReference>
<dbReference type="GO" id="GO:0016163">
    <property type="term" value="F:nitrogenase activity"/>
    <property type="evidence" value="ECO:0007669"/>
    <property type="project" value="UniProtKB-EC"/>
</dbReference>
<dbReference type="GO" id="GO:0009399">
    <property type="term" value="P:nitrogen fixation"/>
    <property type="evidence" value="ECO:0007669"/>
    <property type="project" value="UniProtKB-KW"/>
</dbReference>
<dbReference type="Gene3D" id="3.40.50.300">
    <property type="entry name" value="P-loop containing nucleotide triphosphate hydrolases"/>
    <property type="match status" value="1"/>
</dbReference>
<dbReference type="InterPro" id="IPR000392">
    <property type="entry name" value="NifH/frxC"/>
</dbReference>
<dbReference type="InterPro" id="IPR027417">
    <property type="entry name" value="P-loop_NTPase"/>
</dbReference>
<dbReference type="PANTHER" id="PTHR42864">
    <property type="entry name" value="LIGHT-INDEPENDENT PROTOCHLOROPHYLLIDE REDUCTASE IRON-SULFUR ATP-BINDING PROTEIN"/>
    <property type="match status" value="1"/>
</dbReference>
<dbReference type="PANTHER" id="PTHR42864:SF2">
    <property type="entry name" value="LIGHT-INDEPENDENT PROTOCHLOROPHYLLIDE REDUCTASE IRON-SULFUR ATP-BINDING PROTEIN"/>
    <property type="match status" value="1"/>
</dbReference>
<dbReference type="Pfam" id="PF00142">
    <property type="entry name" value="Fer4_NifH"/>
    <property type="match status" value="1"/>
</dbReference>
<dbReference type="PRINTS" id="PR00091">
    <property type="entry name" value="NITROGNASEII"/>
</dbReference>
<dbReference type="SUPFAM" id="SSF52540">
    <property type="entry name" value="P-loop containing nucleoside triphosphate hydrolases"/>
    <property type="match status" value="1"/>
</dbReference>
<dbReference type="PROSITE" id="PS51026">
    <property type="entry name" value="NIFH_FRXC_3"/>
    <property type="match status" value="1"/>
</dbReference>
<protein>
    <recommendedName>
        <fullName>Nitrogenase iron protein</fullName>
        <ecNumber>1.18.6.1</ecNumber>
    </recommendedName>
    <alternativeName>
        <fullName>Nitrogenase Fe protein</fullName>
    </alternativeName>
    <alternativeName>
        <fullName>Nitrogenase component II</fullName>
    </alternativeName>
    <alternativeName>
        <fullName>Nitrogenase reductase</fullName>
    </alternativeName>
</protein>
<proteinExistence type="inferred from homology"/>